<feature type="chain" id="PRO_0000317116" description="RNA binding protein fox-1 homolog 2">
    <location>
        <begin position="1"/>
        <end position="432"/>
    </location>
</feature>
<feature type="domain" description="RRM" evidence="4">
    <location>
        <begin position="163"/>
        <end position="239"/>
    </location>
</feature>
<feature type="region of interest" description="Disordered" evidence="5">
    <location>
        <begin position="1"/>
        <end position="169"/>
    </location>
</feature>
<feature type="compositionally biased region" description="Low complexity" evidence="5">
    <location>
        <begin position="1"/>
        <end position="21"/>
    </location>
</feature>
<feature type="compositionally biased region" description="Polar residues" evidence="5">
    <location>
        <begin position="60"/>
        <end position="69"/>
    </location>
</feature>
<feature type="compositionally biased region" description="Polar residues" evidence="5">
    <location>
        <begin position="101"/>
        <end position="121"/>
    </location>
</feature>
<feature type="compositionally biased region" description="Low complexity" evidence="5">
    <location>
        <begin position="122"/>
        <end position="159"/>
    </location>
</feature>
<feature type="site" description="Interaction with RNA" evidence="1">
    <location>
        <position position="164"/>
    </location>
</feature>
<feature type="site" description="Interaction with RNA" evidence="1">
    <location>
        <position position="172"/>
    </location>
</feature>
<feature type="site" description="Interaction with RNA" evidence="1">
    <location>
        <position position="173"/>
    </location>
</feature>
<feature type="site" description="Interaction with RNA" evidence="1">
    <location>
        <position position="197"/>
    </location>
</feature>
<feature type="site" description="Interaction with RNA" evidence="1">
    <location>
        <position position="202"/>
    </location>
</feature>
<feature type="site" description="Interaction with RNA" evidence="1">
    <location>
        <position position="206"/>
    </location>
</feature>
<feature type="site" description="Interaction with RNA" evidence="1">
    <location>
        <position position="230"/>
    </location>
</feature>
<feature type="site" description="Interaction with RNA" evidence="1">
    <location>
        <position position="240"/>
    </location>
</feature>
<feature type="modified residue" description="Omega-N-methylarginine" evidence="3">
    <location>
        <position position="323"/>
    </location>
</feature>
<feature type="modified residue" description="Asymmetric dimethylarginine" evidence="3">
    <location>
        <position position="339"/>
    </location>
</feature>
<feature type="modified residue" description="Asymmetric dimethylarginine" evidence="2">
    <location>
        <position position="371"/>
    </location>
</feature>
<feature type="modified residue" description="Asymmetric dimethylarginine; alternate" evidence="3">
    <location>
        <position position="423"/>
    </location>
</feature>
<feature type="modified residue" description="Omega-N-methylarginine; alternate" evidence="3">
    <location>
        <position position="423"/>
    </location>
</feature>
<feature type="modified residue" description="Asymmetric dimethylarginine; alternate" evidence="3">
    <location>
        <position position="428"/>
    </location>
</feature>
<feature type="modified residue" description="Omega-N-methylarginine; alternate" evidence="3">
    <location>
        <position position="428"/>
    </location>
</feature>
<keyword id="KW-0963">Cytoplasm</keyword>
<keyword id="KW-0488">Methylation</keyword>
<keyword id="KW-0507">mRNA processing</keyword>
<keyword id="KW-0508">mRNA splicing</keyword>
<keyword id="KW-0539">Nucleus</keyword>
<keyword id="KW-1185">Reference proteome</keyword>
<keyword id="KW-0694">RNA-binding</keyword>
<sequence length="432" mass="45550">MAEGGQAQQQPPQLGPGAAARGMKRESEVELPVPGAGADGPEPGLSKRPRTEEAADEGMQGNQEPTTTPDAMVQPFTTIPFPPPPQNGIPTEYGVPHTQDYAGQTSEHNLTLYGSSQPHGEQSSNSPSNQNGSLTQTEGGAQTDGQQSQTQSSENSESKSTPKRLHVSNIPFRFRDPDLRQMFGQFGKILDVEIIFNERGSKGFGFVTFENSADADRAREKLHGTVVEGRKIEVNNATARVMTNKKMVTPYANGWKLSPVVGAVYGPELYAASSFQADVSLGNEAAVPLSGRGGINTYIPLISLPLVPGFPYPTAATTAAAFRGAHLRGRGRTVYGAVRAVPPTAIPAYPGVVYQDGFYGADLYGGYAAYRYAQPATATAATAAAAAAAAYSDGYGRVYTADPYHALAPAASYGVGAVASLYRGGYSRFAPY</sequence>
<organism>
    <name type="scientific">Rattus norvegicus</name>
    <name type="common">Rat</name>
    <dbReference type="NCBI Taxonomy" id="10116"/>
    <lineage>
        <taxon>Eukaryota</taxon>
        <taxon>Metazoa</taxon>
        <taxon>Chordata</taxon>
        <taxon>Craniata</taxon>
        <taxon>Vertebrata</taxon>
        <taxon>Euteleostomi</taxon>
        <taxon>Mammalia</taxon>
        <taxon>Eutheria</taxon>
        <taxon>Euarchontoglires</taxon>
        <taxon>Glires</taxon>
        <taxon>Rodentia</taxon>
        <taxon>Myomorpha</taxon>
        <taxon>Muroidea</taxon>
        <taxon>Muridae</taxon>
        <taxon>Murinae</taxon>
        <taxon>Rattus</taxon>
    </lineage>
</organism>
<dbReference type="EMBL" id="BC128766">
    <property type="protein sequence ID" value="AAI28767.1"/>
    <property type="molecule type" value="mRNA"/>
</dbReference>
<dbReference type="RefSeq" id="NP_001073364.1">
    <property type="nucleotide sequence ID" value="NM_001079895.2"/>
</dbReference>
<dbReference type="SMR" id="A1A5R1"/>
<dbReference type="BioGRID" id="263851">
    <property type="interactions" value="1"/>
</dbReference>
<dbReference type="FunCoup" id="A1A5R1">
    <property type="interactions" value="1668"/>
</dbReference>
<dbReference type="STRING" id="10116.ENSRNOP00000063462"/>
<dbReference type="PhosphoSitePlus" id="A1A5R1"/>
<dbReference type="jPOST" id="A1A5R1"/>
<dbReference type="PaxDb" id="10116-ENSRNOP00000063462"/>
<dbReference type="PeptideAtlas" id="A1A5R1"/>
<dbReference type="Ensembl" id="ENSRNOT00000066431.2">
    <property type="protein sequence ID" value="ENSRNOP00000063462.1"/>
    <property type="gene ID" value="ENSRNOG00000004688.8"/>
</dbReference>
<dbReference type="GeneID" id="362950"/>
<dbReference type="KEGG" id="rno:362950"/>
<dbReference type="UCSC" id="RGD:1311838">
    <property type="organism name" value="rat"/>
</dbReference>
<dbReference type="AGR" id="RGD:1311838"/>
<dbReference type="CTD" id="23543"/>
<dbReference type="RGD" id="1311838">
    <property type="gene designation" value="Rbfox2"/>
</dbReference>
<dbReference type="eggNOG" id="KOG0125">
    <property type="taxonomic scope" value="Eukaryota"/>
</dbReference>
<dbReference type="GeneTree" id="ENSGT00940000157534"/>
<dbReference type="HOGENOM" id="CLU_048440_0_1_1"/>
<dbReference type="InParanoid" id="A1A5R1"/>
<dbReference type="OrthoDB" id="5382468at2759"/>
<dbReference type="PhylomeDB" id="A1A5R1"/>
<dbReference type="TreeFam" id="TF315942"/>
<dbReference type="PRO" id="PR:A1A5R1"/>
<dbReference type="Proteomes" id="UP000002494">
    <property type="component" value="Chromosome 7"/>
</dbReference>
<dbReference type="Bgee" id="ENSRNOG00000004688">
    <property type="expression patterns" value="Expressed in frontal cortex and 19 other cell types or tissues"/>
</dbReference>
<dbReference type="ExpressionAtlas" id="A1A5R1">
    <property type="expression patterns" value="baseline and differential"/>
</dbReference>
<dbReference type="GO" id="GO:0005737">
    <property type="term" value="C:cytoplasm"/>
    <property type="evidence" value="ECO:0000314"/>
    <property type="project" value="RGD"/>
</dbReference>
<dbReference type="GO" id="GO:0005634">
    <property type="term" value="C:nucleus"/>
    <property type="evidence" value="ECO:0000314"/>
    <property type="project" value="RGD"/>
</dbReference>
<dbReference type="GO" id="GO:0140297">
    <property type="term" value="F:DNA-binding transcription factor binding"/>
    <property type="evidence" value="ECO:0000250"/>
    <property type="project" value="UniProtKB"/>
</dbReference>
<dbReference type="GO" id="GO:0003729">
    <property type="term" value="F:mRNA binding"/>
    <property type="evidence" value="ECO:0000266"/>
    <property type="project" value="RGD"/>
</dbReference>
<dbReference type="GO" id="GO:0003723">
    <property type="term" value="F:RNA binding"/>
    <property type="evidence" value="ECO:0000250"/>
    <property type="project" value="UniProtKB"/>
</dbReference>
<dbReference type="GO" id="GO:0003727">
    <property type="term" value="F:single-stranded RNA binding"/>
    <property type="evidence" value="ECO:0000314"/>
    <property type="project" value="RGD"/>
</dbReference>
<dbReference type="GO" id="GO:0003714">
    <property type="term" value="F:transcription corepressor activity"/>
    <property type="evidence" value="ECO:0000250"/>
    <property type="project" value="UniProtKB"/>
</dbReference>
<dbReference type="GO" id="GO:1904385">
    <property type="term" value="P:cellular response to angiotensin"/>
    <property type="evidence" value="ECO:0000270"/>
    <property type="project" value="RGD"/>
</dbReference>
<dbReference type="GO" id="GO:1990859">
    <property type="term" value="P:cellular response to endothelin"/>
    <property type="evidence" value="ECO:0000270"/>
    <property type="project" value="RGD"/>
</dbReference>
<dbReference type="GO" id="GO:0070301">
    <property type="term" value="P:cellular response to hydrogen peroxide"/>
    <property type="evidence" value="ECO:0000270"/>
    <property type="project" value="RGD"/>
</dbReference>
<dbReference type="GO" id="GO:0071300">
    <property type="term" value="P:cellular response to retinoic acid"/>
    <property type="evidence" value="ECO:0000270"/>
    <property type="project" value="RGD"/>
</dbReference>
<dbReference type="GO" id="GO:0048813">
    <property type="term" value="P:dendrite morphogenesis"/>
    <property type="evidence" value="ECO:0000266"/>
    <property type="project" value="RGD"/>
</dbReference>
<dbReference type="GO" id="GO:0030520">
    <property type="term" value="P:estrogen receptor signaling pathway"/>
    <property type="evidence" value="ECO:0000250"/>
    <property type="project" value="UniProtKB"/>
</dbReference>
<dbReference type="GO" id="GO:0007507">
    <property type="term" value="P:heart development"/>
    <property type="evidence" value="ECO:0000270"/>
    <property type="project" value="RGD"/>
</dbReference>
<dbReference type="GO" id="GO:0110104">
    <property type="term" value="P:mRNA alternative polyadenylation"/>
    <property type="evidence" value="ECO:0000315"/>
    <property type="project" value="RGD"/>
</dbReference>
<dbReference type="GO" id="GO:0043066">
    <property type="term" value="P:negative regulation of apoptotic process"/>
    <property type="evidence" value="ECO:0000315"/>
    <property type="project" value="RGD"/>
</dbReference>
<dbReference type="GO" id="GO:0045892">
    <property type="term" value="P:negative regulation of DNA-templated transcription"/>
    <property type="evidence" value="ECO:0000250"/>
    <property type="project" value="UniProtKB"/>
</dbReference>
<dbReference type="GO" id="GO:1902631">
    <property type="term" value="P:negative regulation of membrane hyperpolarization"/>
    <property type="evidence" value="ECO:0000315"/>
    <property type="project" value="RGD"/>
</dbReference>
<dbReference type="GO" id="GO:0051902">
    <property type="term" value="P:negative regulation of mitochondrial depolarization"/>
    <property type="evidence" value="ECO:0000315"/>
    <property type="project" value="RGD"/>
</dbReference>
<dbReference type="GO" id="GO:0007399">
    <property type="term" value="P:nervous system development"/>
    <property type="evidence" value="ECO:0000318"/>
    <property type="project" value="GO_Central"/>
</dbReference>
<dbReference type="GO" id="GO:0050885">
    <property type="term" value="P:neuromuscular process controlling balance"/>
    <property type="evidence" value="ECO:0000266"/>
    <property type="project" value="RGD"/>
</dbReference>
<dbReference type="GO" id="GO:0010628">
    <property type="term" value="P:positive regulation of gene expression"/>
    <property type="evidence" value="ECO:0000315"/>
    <property type="project" value="RGD"/>
</dbReference>
<dbReference type="GO" id="GO:0045907">
    <property type="term" value="P:positive regulation of vasoconstriction"/>
    <property type="evidence" value="ECO:0000315"/>
    <property type="project" value="RGD"/>
</dbReference>
<dbReference type="GO" id="GO:0021942">
    <property type="term" value="P:radial glia guided migration of Purkinje cell"/>
    <property type="evidence" value="ECO:0000266"/>
    <property type="project" value="RGD"/>
</dbReference>
<dbReference type="GO" id="GO:0000381">
    <property type="term" value="P:regulation of alternative mRNA splicing, via spliceosome"/>
    <property type="evidence" value="ECO:0000315"/>
    <property type="project" value="UniProtKB"/>
</dbReference>
<dbReference type="GO" id="GO:0010724">
    <property type="term" value="P:regulation of definitive erythrocyte differentiation"/>
    <property type="evidence" value="ECO:0000266"/>
    <property type="project" value="RGD"/>
</dbReference>
<dbReference type="GO" id="GO:0062125">
    <property type="term" value="P:regulation of mitochondrial gene expression"/>
    <property type="evidence" value="ECO:0000315"/>
    <property type="project" value="RGD"/>
</dbReference>
<dbReference type="GO" id="GO:0008380">
    <property type="term" value="P:RNA splicing"/>
    <property type="evidence" value="ECO:0007669"/>
    <property type="project" value="UniProtKB-KW"/>
</dbReference>
<dbReference type="CDD" id="cd12407">
    <property type="entry name" value="RRM_FOX1_like"/>
    <property type="match status" value="1"/>
</dbReference>
<dbReference type="FunFam" id="3.30.70.330:FF:000375">
    <property type="entry name" value="RNA binding fox-1 homolog 1"/>
    <property type="match status" value="1"/>
</dbReference>
<dbReference type="Gene3D" id="3.30.70.330">
    <property type="match status" value="1"/>
</dbReference>
<dbReference type="InterPro" id="IPR025670">
    <property type="entry name" value="Fox-1_C_dom"/>
</dbReference>
<dbReference type="InterPro" id="IPR034237">
    <property type="entry name" value="FOX1_RRM"/>
</dbReference>
<dbReference type="InterPro" id="IPR012677">
    <property type="entry name" value="Nucleotide-bd_a/b_plait_sf"/>
</dbReference>
<dbReference type="InterPro" id="IPR035979">
    <property type="entry name" value="RBD_domain_sf"/>
</dbReference>
<dbReference type="InterPro" id="IPR017325">
    <property type="entry name" value="RBFOX1-3"/>
</dbReference>
<dbReference type="InterPro" id="IPR047131">
    <property type="entry name" value="RBFOX1-like"/>
</dbReference>
<dbReference type="InterPro" id="IPR000504">
    <property type="entry name" value="RRM_dom"/>
</dbReference>
<dbReference type="PANTHER" id="PTHR15597">
    <property type="entry name" value="ATAXIN 2-BINDING PROTEIN 1-RELATED"/>
    <property type="match status" value="1"/>
</dbReference>
<dbReference type="PANTHER" id="PTHR15597:SF31">
    <property type="entry name" value="RNA BINDING PROTEIN FOX-1 HOMOLOG 2"/>
    <property type="match status" value="1"/>
</dbReference>
<dbReference type="Pfam" id="PF12414">
    <property type="entry name" value="Fox-1_C"/>
    <property type="match status" value="1"/>
</dbReference>
<dbReference type="Pfam" id="PF00076">
    <property type="entry name" value="RRM_1"/>
    <property type="match status" value="1"/>
</dbReference>
<dbReference type="PIRSF" id="PIRSF037932">
    <property type="entry name" value="Ataxin_2_bd_A2BP"/>
    <property type="match status" value="1"/>
</dbReference>
<dbReference type="SMART" id="SM00360">
    <property type="entry name" value="RRM"/>
    <property type="match status" value="1"/>
</dbReference>
<dbReference type="SUPFAM" id="SSF54928">
    <property type="entry name" value="RNA-binding domain, RBD"/>
    <property type="match status" value="1"/>
</dbReference>
<dbReference type="PROSITE" id="PS50102">
    <property type="entry name" value="RRM"/>
    <property type="match status" value="1"/>
</dbReference>
<protein>
    <recommendedName>
        <fullName>RNA binding protein fox-1 homolog 2</fullName>
    </recommendedName>
    <alternativeName>
        <fullName>Fox-1 homolog B</fullName>
    </alternativeName>
    <alternativeName>
        <fullName>RNA-binding motif protein 9</fullName>
    </alternativeName>
    <alternativeName>
        <fullName>RNA-binding protein 9</fullName>
    </alternativeName>
</protein>
<comment type="function">
    <text evidence="1 6">RNA-binding protein that regulates alternative splicing events by binding to 5'-UGCAUGU-3' elements. Prevents binding of U2AF2 to the 3'-splice site. Regulates alternative splicing of tissue-specific exons and of differentially spliced exons during erythropoiesis. Seems to act as a coregulatory factor of ER-alpha (By similarity). Together with RNA binding proteins RBPMS and MBNL1/2, activates vascular smooth muscle cells alternative splicing events (PubMed:37548402).</text>
</comment>
<comment type="subunit">
    <text evidence="1 2">Interacts with ER-alpha N-terminal activation domain. Interacts with RBPMS; the interaction allows cooperative assembly of stable cell-specific alternative splicing regulatory complexes (By similarity).</text>
</comment>
<comment type="subcellular location">
    <subcellularLocation>
        <location evidence="1">Nucleus</location>
    </subcellularLocation>
    <subcellularLocation>
        <location evidence="1">Cytoplasm</location>
    </subcellularLocation>
</comment>
<evidence type="ECO:0000250" key="1"/>
<evidence type="ECO:0000250" key="2">
    <source>
        <dbReference type="UniProtKB" id="O43251"/>
    </source>
</evidence>
<evidence type="ECO:0000250" key="3">
    <source>
        <dbReference type="UniProtKB" id="Q8BP71"/>
    </source>
</evidence>
<evidence type="ECO:0000255" key="4">
    <source>
        <dbReference type="PROSITE-ProRule" id="PRU00176"/>
    </source>
</evidence>
<evidence type="ECO:0000256" key="5">
    <source>
        <dbReference type="SAM" id="MobiDB-lite"/>
    </source>
</evidence>
<evidence type="ECO:0000269" key="6">
    <source>
    </source>
</evidence>
<accession>A1A5R1</accession>
<name>RFOX2_RAT</name>
<gene>
    <name type="primary">Rbfox2</name>
    <name type="synonym">Fox2</name>
    <name type="synonym">Rbm9</name>
</gene>
<proteinExistence type="evidence at transcript level"/>
<reference key="1">
    <citation type="journal article" date="2004" name="Genome Res.">
        <title>The status, quality, and expansion of the NIH full-length cDNA project: the Mammalian Gene Collection (MGC).</title>
        <authorList>
            <consortium name="The MGC Project Team"/>
        </authorList>
    </citation>
    <scope>NUCLEOTIDE SEQUENCE [LARGE SCALE MRNA]</scope>
    <source>
        <tissue>Lung</tissue>
    </source>
</reference>
<reference key="2">
    <citation type="journal article" date="2023" name="Nucleic Acids Res.">
        <title>Cell-type specific regulator RBPMS switches alternative splicing via higher-order oligomerization and heterotypic interactions with other splicing regulators.</title>
        <authorList>
            <person name="Yang Y."/>
            <person name="Lee G.C."/>
            <person name="Nakagaki-Silva E."/>
            <person name="Huang Y."/>
            <person name="Peacey M."/>
            <person name="Partridge R."/>
            <person name="Gooding C."/>
            <person name="Smith C.W.J."/>
        </authorList>
    </citation>
    <scope>FUNCTION</scope>
</reference>